<organism>
    <name type="scientific">Equus caballus</name>
    <name type="common">Horse</name>
    <dbReference type="NCBI Taxonomy" id="9796"/>
    <lineage>
        <taxon>Eukaryota</taxon>
        <taxon>Metazoa</taxon>
        <taxon>Chordata</taxon>
        <taxon>Craniata</taxon>
        <taxon>Vertebrata</taxon>
        <taxon>Euteleostomi</taxon>
        <taxon>Mammalia</taxon>
        <taxon>Eutheria</taxon>
        <taxon>Laurasiatheria</taxon>
        <taxon>Perissodactyla</taxon>
        <taxon>Equidae</taxon>
        <taxon>Equus</taxon>
    </lineage>
</organism>
<name>IFNA3_HORSE</name>
<accession>P05005</accession>
<protein>
    <recommendedName>
        <fullName>Interferon alpha-3</fullName>
    </recommendedName>
</protein>
<proteinExistence type="inferred from homology"/>
<dbReference type="EMBL" id="M14542">
    <property type="protein sequence ID" value="AAA30951.1"/>
    <property type="molecule type" value="Genomic_DNA"/>
</dbReference>
<dbReference type="PIR" id="C24912">
    <property type="entry name" value="IVHOA3"/>
</dbReference>
<dbReference type="RefSeq" id="NP_001092911.1">
    <property type="nucleotide sequence ID" value="NM_001099441.1"/>
</dbReference>
<dbReference type="SMR" id="P05005"/>
<dbReference type="FunCoup" id="P05005">
    <property type="interactions" value="281"/>
</dbReference>
<dbReference type="GeneID" id="100053022"/>
<dbReference type="KEGG" id="ecb:100053022"/>
<dbReference type="CTD" id="3439"/>
<dbReference type="InParanoid" id="P05005"/>
<dbReference type="OrthoDB" id="9481177at2759"/>
<dbReference type="Proteomes" id="UP000002281">
    <property type="component" value="Unplaced"/>
</dbReference>
<dbReference type="GO" id="GO:0005615">
    <property type="term" value="C:extracellular space"/>
    <property type="evidence" value="ECO:0000318"/>
    <property type="project" value="GO_Central"/>
</dbReference>
<dbReference type="GO" id="GO:0005125">
    <property type="term" value="F:cytokine activity"/>
    <property type="evidence" value="ECO:0000318"/>
    <property type="project" value="GO_Central"/>
</dbReference>
<dbReference type="GO" id="GO:0005132">
    <property type="term" value="F:type I interferon receptor binding"/>
    <property type="evidence" value="ECO:0000318"/>
    <property type="project" value="GO_Central"/>
</dbReference>
<dbReference type="GO" id="GO:0002250">
    <property type="term" value="P:adaptive immune response"/>
    <property type="evidence" value="ECO:0000318"/>
    <property type="project" value="GO_Central"/>
</dbReference>
<dbReference type="GO" id="GO:0002312">
    <property type="term" value="P:B cell activation involved in immune response"/>
    <property type="evidence" value="ECO:0000318"/>
    <property type="project" value="GO_Central"/>
</dbReference>
<dbReference type="GO" id="GO:0051607">
    <property type="term" value="P:defense response to virus"/>
    <property type="evidence" value="ECO:0007669"/>
    <property type="project" value="UniProtKB-KW"/>
</dbReference>
<dbReference type="GO" id="GO:0006959">
    <property type="term" value="P:humoral immune response"/>
    <property type="evidence" value="ECO:0000318"/>
    <property type="project" value="GO_Central"/>
</dbReference>
<dbReference type="GO" id="GO:0002323">
    <property type="term" value="P:natural killer cell activation involved in immune response"/>
    <property type="evidence" value="ECO:0000318"/>
    <property type="project" value="GO_Central"/>
</dbReference>
<dbReference type="GO" id="GO:0043330">
    <property type="term" value="P:response to exogenous dsRNA"/>
    <property type="evidence" value="ECO:0000318"/>
    <property type="project" value="GO_Central"/>
</dbReference>
<dbReference type="GO" id="GO:0002286">
    <property type="term" value="P:T cell activation involved in immune response"/>
    <property type="evidence" value="ECO:0000318"/>
    <property type="project" value="GO_Central"/>
</dbReference>
<dbReference type="GO" id="GO:0060337">
    <property type="term" value="P:type I interferon-mediated signaling pathway"/>
    <property type="evidence" value="ECO:0000318"/>
    <property type="project" value="GO_Central"/>
</dbReference>
<dbReference type="CDD" id="cd00095">
    <property type="entry name" value="IFab"/>
    <property type="match status" value="1"/>
</dbReference>
<dbReference type="FunFam" id="1.20.1250.10:FF:000001">
    <property type="entry name" value="Interferon alpha"/>
    <property type="match status" value="1"/>
</dbReference>
<dbReference type="Gene3D" id="1.20.1250.10">
    <property type="match status" value="1"/>
</dbReference>
<dbReference type="InterPro" id="IPR009079">
    <property type="entry name" value="4_helix_cytokine-like_core"/>
</dbReference>
<dbReference type="InterPro" id="IPR000471">
    <property type="entry name" value="Interferon_alpha/beta/delta"/>
</dbReference>
<dbReference type="PANTHER" id="PTHR11691:SF60">
    <property type="entry name" value="INTERFERON ALPHA-5"/>
    <property type="match status" value="1"/>
</dbReference>
<dbReference type="PANTHER" id="PTHR11691">
    <property type="entry name" value="TYPE I INTERFERON"/>
    <property type="match status" value="1"/>
</dbReference>
<dbReference type="Pfam" id="PF00143">
    <property type="entry name" value="Interferon"/>
    <property type="match status" value="1"/>
</dbReference>
<dbReference type="PRINTS" id="PR00266">
    <property type="entry name" value="INTERFERONAB"/>
</dbReference>
<dbReference type="SMART" id="SM00076">
    <property type="entry name" value="IFabd"/>
    <property type="match status" value="1"/>
</dbReference>
<dbReference type="SUPFAM" id="SSF47266">
    <property type="entry name" value="4-helical cytokines"/>
    <property type="match status" value="1"/>
</dbReference>
<dbReference type="PROSITE" id="PS00252">
    <property type="entry name" value="INTERFERON_A_B_D"/>
    <property type="match status" value="1"/>
</dbReference>
<reference key="1">
    <citation type="journal article" date="1986" name="DNA">
        <title>Molecular cloning and expression in Escherichia coli of equine type I interferons.</title>
        <authorList>
            <person name="Himmler A."/>
            <person name="Hauptmann R."/>
            <person name="Adolf G.R."/>
            <person name="Swetly P."/>
        </authorList>
    </citation>
    <scope>NUCLEOTIDE SEQUENCE [GENOMIC DNA]</scope>
</reference>
<sequence>MALPVSLLMALVVLSCHSSCSLGCDLPHTHSLGNTRVLMLLGQMRRISPFSCLKDRNDFGFPQEVFDGNQFRKPQAISAVHETIQQIFHLFSTDGSSAAWDESLLDKLYTGLYQQLTELEACLSQEVGVEETPLMNEDSLLAVRRYFQRIALYLQEKKYSPCAWEIVRAEIMRSFSSSTNLPQS</sequence>
<feature type="signal peptide">
    <location>
        <begin position="1"/>
        <end position="23"/>
    </location>
</feature>
<feature type="chain" id="PRO_0000016373" description="Interferon alpha-3">
    <location>
        <begin position="24"/>
        <end position="184"/>
    </location>
</feature>
<feature type="disulfide bond" evidence="1">
    <location>
        <begin position="24"/>
        <end position="122"/>
    </location>
</feature>
<feature type="disulfide bond" evidence="1">
    <location>
        <begin position="52"/>
        <end position="162"/>
    </location>
</feature>
<keyword id="KW-0051">Antiviral defense</keyword>
<keyword id="KW-0202">Cytokine</keyword>
<keyword id="KW-1015">Disulfide bond</keyword>
<keyword id="KW-1185">Reference proteome</keyword>
<keyword id="KW-0964">Secreted</keyword>
<keyword id="KW-0732">Signal</keyword>
<comment type="function">
    <text>Produced by macrophages, IFN-alpha have antiviral activities. Interferon stimulates the production of two enzymes: a protein kinase and an oligoadenylate synthetase.</text>
</comment>
<comment type="subcellular location">
    <subcellularLocation>
        <location>Secreted</location>
    </subcellularLocation>
</comment>
<comment type="similarity">
    <text evidence="2">Belongs to the alpha/beta interferon family.</text>
</comment>
<evidence type="ECO:0000250" key="1"/>
<evidence type="ECO:0000305" key="2"/>